<protein>
    <recommendedName>
        <fullName>Gastrula zinc finger protein 5-1</fullName>
    </recommendedName>
    <alternativeName>
        <fullName>XlCGF5.1</fullName>
    </alternativeName>
</protein>
<reference key="1">
    <citation type="journal article" date="1993" name="Mol. Biol. Rep.">
        <title>Gene structure and alternative splicing of XFG 5-1, a X. laevis Zn finger protein with RNA homopolymer binding activity.</title>
        <authorList>
            <person name="Koester M."/>
            <person name="Hille S."/>
            <person name="Pieler T."/>
            <person name="Knoechel W."/>
        </authorList>
    </citation>
    <scope>NUCLEOTIDE SEQUENCE [GENOMIC DNA]</scope>
    <source>
        <tissue>Embryo</tissue>
        <tissue>Oocyte</tissue>
    </source>
</reference>
<reference key="2">
    <citation type="journal article" date="1994" name="Biochim. Biophys. Acta">
        <title>The FAR domain defines a new Xenopus laevis zinc finger protein subfamily with specific RNA homopolymer binding activity.</title>
        <authorList>
            <person name="Klocke B."/>
            <person name="Koester M."/>
            <person name="Hille S."/>
            <person name="Bouwmeester T."/>
            <person name="Boehm S."/>
            <person name="Pieler T."/>
            <person name="Knoechel W."/>
        </authorList>
    </citation>
    <scope>NUCLEOTIDE SEQUENCE [MRNA]</scope>
    <source>
        <tissue>Embryo</tissue>
        <tissue>Oocyte</tissue>
    </source>
</reference>
<reference key="3">
    <citation type="journal article" date="1991" name="EMBO J.">
        <title>Structure, expression and in vitro functional characterization of a novel RNA binding zinc finger protein from Xenopus.</title>
        <authorList>
            <person name="Koster M."/>
            <person name="Kuhn U."/>
            <person name="Bouwmeester T."/>
            <person name="Nietfeld W."/>
            <person name="el-Baradi T."/>
            <person name="Knochel W."/>
            <person name="Pieler T."/>
        </authorList>
    </citation>
    <scope>NUCLEOTIDE SEQUENCE (ISOFORM 5-1A)</scope>
</reference>
<reference key="4">
    <citation type="journal article" date="1989" name="J. Mol. Biol.">
        <title>Second-order repeats in Xenopus laevis finger proteins.</title>
        <authorList>
            <person name="Nietfeld W."/>
            <person name="El-Baradi T."/>
            <person name="Mentzel H."/>
            <person name="Pieler T."/>
            <person name="Koester M."/>
            <person name="Poeting A."/>
            <person name="Knoechel W."/>
        </authorList>
    </citation>
    <scope>NUCLEOTIDE SEQUENCE OF 234-439</scope>
</reference>
<accession>P18725</accession>
<organism>
    <name type="scientific">Xenopus laevis</name>
    <name type="common">African clawed frog</name>
    <dbReference type="NCBI Taxonomy" id="8355"/>
    <lineage>
        <taxon>Eukaryota</taxon>
        <taxon>Metazoa</taxon>
        <taxon>Chordata</taxon>
        <taxon>Craniata</taxon>
        <taxon>Vertebrata</taxon>
        <taxon>Euteleostomi</taxon>
        <taxon>Amphibia</taxon>
        <taxon>Batrachia</taxon>
        <taxon>Anura</taxon>
        <taxon>Pipoidea</taxon>
        <taxon>Pipidae</taxon>
        <taxon>Xenopodinae</taxon>
        <taxon>Xenopus</taxon>
        <taxon>Xenopus</taxon>
    </lineage>
</organism>
<keyword id="KW-0025">Alternative splicing</keyword>
<keyword id="KW-0479">Metal-binding</keyword>
<keyword id="KW-0597">Phosphoprotein</keyword>
<keyword id="KW-1185">Reference proteome</keyword>
<keyword id="KW-0677">Repeat</keyword>
<keyword id="KW-0694">RNA-binding</keyword>
<keyword id="KW-0862">Zinc</keyword>
<keyword id="KW-0863">Zinc-finger</keyword>
<comment type="function">
    <text>Binds to RNA homomers.</text>
</comment>
<comment type="alternative products">
    <event type="alternative splicing"/>
    <isoform>
        <id>P18725-1</id>
        <name>5-1B</name>
        <sequence type="displayed"/>
    </isoform>
    <isoform>
        <id>P18725-3</id>
        <name>5-1</name>
        <sequence type="not described"/>
    </isoform>
    <isoform>
        <id>P18725-2</id>
        <name>5-1A</name>
        <sequence type="described" ref="VSP_006933"/>
    </isoform>
</comment>
<feature type="chain" id="PRO_0000047782" description="Gastrula zinc finger protein 5-1">
    <location>
        <begin position="1"/>
        <end position="445"/>
    </location>
</feature>
<feature type="zinc finger region" description="C2H2-type 1; atypical" evidence="2">
    <location>
        <begin position="185"/>
        <end position="210"/>
    </location>
</feature>
<feature type="zinc finger region" description="C2H2-type 2" evidence="2">
    <location>
        <begin position="239"/>
        <end position="261"/>
    </location>
</feature>
<feature type="zinc finger region" description="C2H2-type 3" evidence="2">
    <location>
        <begin position="267"/>
        <end position="289"/>
    </location>
</feature>
<feature type="zinc finger region" description="C2H2-type 4" evidence="2">
    <location>
        <begin position="295"/>
        <end position="317"/>
    </location>
</feature>
<feature type="zinc finger region" description="C2H2-type 5" evidence="2">
    <location>
        <begin position="323"/>
        <end position="345"/>
    </location>
</feature>
<feature type="zinc finger region" description="C2H2-type 6" evidence="2">
    <location>
        <begin position="351"/>
        <end position="373"/>
    </location>
</feature>
<feature type="zinc finger region" description="C2H2-type 7" evidence="2">
    <location>
        <begin position="379"/>
        <end position="401"/>
    </location>
</feature>
<feature type="zinc finger region" description="C2H2-type 8" evidence="2">
    <location>
        <begin position="407"/>
        <end position="429"/>
    </location>
</feature>
<feature type="region of interest" description="Disordered" evidence="3">
    <location>
        <begin position="1"/>
        <end position="38"/>
    </location>
</feature>
<feature type="modified residue" description="Phosphoserine; by CK2" evidence="1">
    <location>
        <position position="89"/>
    </location>
</feature>
<feature type="splice variant" id="VSP_006933" description="In isoform 5-1A." evidence="4">
    <location>
        <begin position="107"/>
        <end position="131"/>
    </location>
</feature>
<feature type="sequence variant" description="In 5-1.">
    <original>E</original>
    <variation>D</variation>
    <location>
        <position position="76"/>
    </location>
</feature>
<feature type="sequence variant" description="In 5-1.">
    <original>F</original>
    <variation>S</variation>
    <location>
        <position position="103"/>
    </location>
</feature>
<feature type="sequence variant" description="In 5-1.">
    <original>A</original>
    <variation>S</variation>
    <location>
        <position position="195"/>
    </location>
</feature>
<feature type="sequence conflict" description="In Ref. 4." evidence="4" ref="4">
    <original>M</original>
    <variation>V</variation>
    <location>
        <position position="314"/>
    </location>
</feature>
<feature type="sequence conflict" description="In Ref. 4." evidence="4" ref="4">
    <original>C</original>
    <variation>L</variation>
    <location>
        <position position="415"/>
    </location>
</feature>
<evidence type="ECO:0000255" key="1"/>
<evidence type="ECO:0000255" key="2">
    <source>
        <dbReference type="PROSITE-ProRule" id="PRU00042"/>
    </source>
</evidence>
<evidence type="ECO:0000256" key="3">
    <source>
        <dbReference type="SAM" id="MobiDB-lite"/>
    </source>
</evidence>
<evidence type="ECO:0000305" key="4"/>
<dbReference type="EMBL" id="X71067">
    <property type="protein sequence ID" value="CAA50391.1"/>
    <property type="molecule type" value="Genomic_DNA"/>
</dbReference>
<dbReference type="EMBL" id="X71067">
    <property type="protein sequence ID" value="CAA50390.1"/>
    <property type="molecule type" value="Genomic_DNA"/>
</dbReference>
<dbReference type="EMBL" id="X70677">
    <property type="protein sequence ID" value="CAA50013.1"/>
    <property type="molecule type" value="mRNA"/>
</dbReference>
<dbReference type="PIR" id="I51700">
    <property type="entry name" value="S32036"/>
</dbReference>
<dbReference type="RefSeq" id="NP_001094395.1">
    <property type="nucleotide sequence ID" value="NM_001100925.1"/>
</dbReference>
<dbReference type="SMR" id="P18725"/>
<dbReference type="GeneID" id="397956"/>
<dbReference type="KEGG" id="xla:397956"/>
<dbReference type="CTD" id="397956"/>
<dbReference type="OrthoDB" id="6077919at2759"/>
<dbReference type="Proteomes" id="UP000186698">
    <property type="component" value="Chromosome 6L"/>
</dbReference>
<dbReference type="Bgee" id="397956">
    <property type="expression patterns" value="Expressed in oocyte and 19 other cell types or tissues"/>
</dbReference>
<dbReference type="GO" id="GO:0005634">
    <property type="term" value="C:nucleus"/>
    <property type="evidence" value="ECO:0000318"/>
    <property type="project" value="GO_Central"/>
</dbReference>
<dbReference type="GO" id="GO:0001228">
    <property type="term" value="F:DNA-binding transcription activator activity, RNA polymerase II-specific"/>
    <property type="evidence" value="ECO:0000318"/>
    <property type="project" value="GO_Central"/>
</dbReference>
<dbReference type="GO" id="GO:0003723">
    <property type="term" value="F:RNA binding"/>
    <property type="evidence" value="ECO:0007669"/>
    <property type="project" value="UniProtKB-KW"/>
</dbReference>
<dbReference type="GO" id="GO:0000978">
    <property type="term" value="F:RNA polymerase II cis-regulatory region sequence-specific DNA binding"/>
    <property type="evidence" value="ECO:0000318"/>
    <property type="project" value="GO_Central"/>
</dbReference>
<dbReference type="GO" id="GO:0008270">
    <property type="term" value="F:zinc ion binding"/>
    <property type="evidence" value="ECO:0007669"/>
    <property type="project" value="UniProtKB-KW"/>
</dbReference>
<dbReference type="GO" id="GO:0006357">
    <property type="term" value="P:regulation of transcription by RNA polymerase II"/>
    <property type="evidence" value="ECO:0000318"/>
    <property type="project" value="GO_Central"/>
</dbReference>
<dbReference type="FunFam" id="3.30.160.60:FF:000706">
    <property type="entry name" value="Zinc finger protein"/>
    <property type="match status" value="2"/>
</dbReference>
<dbReference type="FunFam" id="3.30.160.60:FF:000759">
    <property type="entry name" value="zinc finger protein 16"/>
    <property type="match status" value="1"/>
</dbReference>
<dbReference type="FunFam" id="3.30.160.60:FF:002005">
    <property type="entry name" value="Zinc finger protein 200"/>
    <property type="match status" value="1"/>
</dbReference>
<dbReference type="FunFam" id="3.30.160.60:FF:000358">
    <property type="entry name" value="zinc finger protein 24"/>
    <property type="match status" value="1"/>
</dbReference>
<dbReference type="FunFam" id="3.30.160.60:FF:002343">
    <property type="entry name" value="Zinc finger protein 33A"/>
    <property type="match status" value="2"/>
</dbReference>
<dbReference type="Gene3D" id="3.30.160.60">
    <property type="entry name" value="Classic Zinc Finger"/>
    <property type="match status" value="7"/>
</dbReference>
<dbReference type="InterPro" id="IPR036236">
    <property type="entry name" value="Znf_C2H2_sf"/>
</dbReference>
<dbReference type="InterPro" id="IPR013087">
    <property type="entry name" value="Znf_C2H2_type"/>
</dbReference>
<dbReference type="PANTHER" id="PTHR24408">
    <property type="entry name" value="ZINC FINGER PROTEIN"/>
    <property type="match status" value="1"/>
</dbReference>
<dbReference type="PANTHER" id="PTHR24408:SF34">
    <property type="entry name" value="ZINC FINGER PROTEIN 672-RELATED"/>
    <property type="match status" value="1"/>
</dbReference>
<dbReference type="Pfam" id="PF00096">
    <property type="entry name" value="zf-C2H2"/>
    <property type="match status" value="7"/>
</dbReference>
<dbReference type="SMART" id="SM00355">
    <property type="entry name" value="ZnF_C2H2"/>
    <property type="match status" value="8"/>
</dbReference>
<dbReference type="SUPFAM" id="SSF57667">
    <property type="entry name" value="beta-beta-alpha zinc fingers"/>
    <property type="match status" value="4"/>
</dbReference>
<dbReference type="PROSITE" id="PS00028">
    <property type="entry name" value="ZINC_FINGER_C2H2_1"/>
    <property type="match status" value="7"/>
</dbReference>
<dbReference type="PROSITE" id="PS50157">
    <property type="entry name" value="ZINC_FINGER_C2H2_2"/>
    <property type="match status" value="8"/>
</dbReference>
<proteinExistence type="evidence at transcript level"/>
<sequence length="445" mass="49530">MLQIKTEKEELDCGDDQNPKESSAVPLTDGASPEPQPQILQIKIKEEEPDYEYYLPTIKREMDPVPGAASPLAESEILQIKIKEEEPDSEDDGNSAATSAVTFRDWDNCWSDEENWDDSRPQLNQYNSDFPGSADTANTPAINTVLSRGNGLFVVNQEKRVATNSSCQSDTGHVDCSVGSEPSGFICCKCGDSFAHHSDLHTHLYACAGHNITSSFTNASEEGQHSHKNGGVLPREKPFKCTVCGKCFTLKNSLQLHHRIHTGEKPFTCTECGKSFAQSCSLQLHSRTHTGYNPYVCTECGKRFSSNSGLRRHMRTHTGVKPYACKECGKFFSDLSTLHRHQNSHKGEKPFICTECGKGFTLKDSLHRHQRTHTGEKPFICSQCGKSYSQSSNLIKHQMIHTGVKPFSCSECGKCFAVKDGLRNHQRVHMRRNYSAAQNVAEFSL</sequence>
<name>ZG5_XENLA</name>